<dbReference type="EC" id="2.8.1.-" evidence="1"/>
<dbReference type="EMBL" id="CP000036">
    <property type="protein sequence ID" value="ABB67813.1"/>
    <property type="molecule type" value="Genomic_DNA"/>
</dbReference>
<dbReference type="RefSeq" id="WP_001209714.1">
    <property type="nucleotide sequence ID" value="NC_007613.1"/>
</dbReference>
<dbReference type="SMR" id="Q31VU5"/>
<dbReference type="KEGG" id="sbo:SBO_3325"/>
<dbReference type="HOGENOM" id="CLU_132095_0_0_6"/>
<dbReference type="Proteomes" id="UP000007067">
    <property type="component" value="Chromosome"/>
</dbReference>
<dbReference type="GO" id="GO:1990228">
    <property type="term" value="C:sulfurtransferase complex"/>
    <property type="evidence" value="ECO:0007669"/>
    <property type="project" value="TreeGrafter"/>
</dbReference>
<dbReference type="GO" id="GO:0097163">
    <property type="term" value="F:sulfur carrier activity"/>
    <property type="evidence" value="ECO:0007669"/>
    <property type="project" value="TreeGrafter"/>
</dbReference>
<dbReference type="GO" id="GO:0016783">
    <property type="term" value="F:sulfurtransferase activity"/>
    <property type="evidence" value="ECO:0007669"/>
    <property type="project" value="UniProtKB-UniRule"/>
</dbReference>
<dbReference type="GO" id="GO:0002143">
    <property type="term" value="P:tRNA wobble position uridine thiolation"/>
    <property type="evidence" value="ECO:0007669"/>
    <property type="project" value="TreeGrafter"/>
</dbReference>
<dbReference type="FunFam" id="3.40.1260.10:FF:000001">
    <property type="entry name" value="Sulfurtransferase TusD"/>
    <property type="match status" value="1"/>
</dbReference>
<dbReference type="Gene3D" id="3.40.1260.10">
    <property type="entry name" value="DsrEFH-like"/>
    <property type="match status" value="1"/>
</dbReference>
<dbReference type="HAMAP" id="MF_00390">
    <property type="entry name" value="Thiourid_synth_D"/>
    <property type="match status" value="1"/>
</dbReference>
<dbReference type="InterPro" id="IPR027396">
    <property type="entry name" value="DsrEFH-like"/>
</dbReference>
<dbReference type="InterPro" id="IPR003787">
    <property type="entry name" value="Sulphur_relay_DsrE/F-like"/>
</dbReference>
<dbReference type="InterPro" id="IPR017463">
    <property type="entry name" value="Sulphur_relay_TusD/DsrE"/>
</dbReference>
<dbReference type="NCBIfam" id="NF001237">
    <property type="entry name" value="PRK00207.1"/>
    <property type="match status" value="1"/>
</dbReference>
<dbReference type="NCBIfam" id="TIGR03012">
    <property type="entry name" value="sulf_tusD_dsrE"/>
    <property type="match status" value="1"/>
</dbReference>
<dbReference type="PANTHER" id="PTHR34874">
    <property type="entry name" value="PROTEIN YCHN"/>
    <property type="match status" value="1"/>
</dbReference>
<dbReference type="PANTHER" id="PTHR34874:SF3">
    <property type="entry name" value="SULFURTRANSFERASE TUSD"/>
    <property type="match status" value="1"/>
</dbReference>
<dbReference type="Pfam" id="PF02635">
    <property type="entry name" value="DsrE"/>
    <property type="match status" value="1"/>
</dbReference>
<dbReference type="SUPFAM" id="SSF75169">
    <property type="entry name" value="DsrEFH-like"/>
    <property type="match status" value="1"/>
</dbReference>
<protein>
    <recommendedName>
        <fullName evidence="1">Sulfurtransferase TusD</fullName>
        <ecNumber evidence="1">2.8.1.-</ecNumber>
    </recommendedName>
    <alternativeName>
        <fullName evidence="1">tRNA 2-thiouridine synthesizing protein D</fullName>
    </alternativeName>
</protein>
<proteinExistence type="inferred from homology"/>
<comment type="function">
    <text evidence="1">Part of a sulfur-relay system required for 2-thiolation of 5-methylaminomethyl-2-thiouridine (mnm(5)s(2)U) at tRNA wobble positions. Accepts sulfur from TusA and transfers it in turn to TusE.</text>
</comment>
<comment type="subunit">
    <text evidence="1">Heterohexamer, formed by a dimer of trimers. The hexameric TusBCD complex contains 2 copies each of TusB, TusC and TusD. The TusBCD complex interacts with TusE.</text>
</comment>
<comment type="subcellular location">
    <subcellularLocation>
        <location evidence="1">Cytoplasm</location>
    </subcellularLocation>
</comment>
<comment type="similarity">
    <text evidence="1">Belongs to the DsrE/TusD family.</text>
</comment>
<keyword id="KW-0963">Cytoplasm</keyword>
<keyword id="KW-0808">Transferase</keyword>
<keyword id="KW-0819">tRNA processing</keyword>
<accession>Q31VU5</accession>
<gene>
    <name evidence="1" type="primary">tusD</name>
    <name type="ordered locus">SBO_3325</name>
</gene>
<reference key="1">
    <citation type="journal article" date="2005" name="Nucleic Acids Res.">
        <title>Genome dynamics and diversity of Shigella species, the etiologic agents of bacillary dysentery.</title>
        <authorList>
            <person name="Yang F."/>
            <person name="Yang J."/>
            <person name="Zhang X."/>
            <person name="Chen L."/>
            <person name="Jiang Y."/>
            <person name="Yan Y."/>
            <person name="Tang X."/>
            <person name="Wang J."/>
            <person name="Xiong Z."/>
            <person name="Dong J."/>
            <person name="Xue Y."/>
            <person name="Zhu Y."/>
            <person name="Xu X."/>
            <person name="Sun L."/>
            <person name="Chen S."/>
            <person name="Nie H."/>
            <person name="Peng J."/>
            <person name="Xu J."/>
            <person name="Wang Y."/>
            <person name="Yuan Z."/>
            <person name="Wen Y."/>
            <person name="Yao Z."/>
            <person name="Shen Y."/>
            <person name="Qiang B."/>
            <person name="Hou Y."/>
            <person name="Yu J."/>
            <person name="Jin Q."/>
        </authorList>
    </citation>
    <scope>NUCLEOTIDE SEQUENCE [LARGE SCALE GENOMIC DNA]</scope>
    <source>
        <strain>Sb227</strain>
    </source>
</reference>
<organism>
    <name type="scientific">Shigella boydii serotype 4 (strain Sb227)</name>
    <dbReference type="NCBI Taxonomy" id="300268"/>
    <lineage>
        <taxon>Bacteria</taxon>
        <taxon>Pseudomonadati</taxon>
        <taxon>Pseudomonadota</taxon>
        <taxon>Gammaproteobacteria</taxon>
        <taxon>Enterobacterales</taxon>
        <taxon>Enterobacteriaceae</taxon>
        <taxon>Shigella</taxon>
    </lineage>
</organism>
<feature type="chain" id="PRO_0000234535" description="Sulfurtransferase TusD">
    <location>
        <begin position="1"/>
        <end position="128"/>
    </location>
</feature>
<feature type="active site" description="Cysteine persulfide intermediate" evidence="1">
    <location>
        <position position="78"/>
    </location>
</feature>
<sequence>MRFAIVVTGPAYGTQQASSAFQFAQALIVEGHELSSVFFYRGGVYNANQLTSPASDEFDLVRGWQQLNAQHGVALNICVAAALRRGIVDETEAGRLGLASSNLQPGFTLSGLGALAEASLTCDRVVQF</sequence>
<name>TUSD_SHIBS</name>
<evidence type="ECO:0000255" key="1">
    <source>
        <dbReference type="HAMAP-Rule" id="MF_00390"/>
    </source>
</evidence>